<feature type="chain" id="PRO_1000045645" description="Probable glycine dehydrogenase (decarboxylating) subunit 1">
    <location>
        <begin position="1"/>
        <end position="450"/>
    </location>
</feature>
<gene>
    <name evidence="1" type="primary">gcvPA</name>
    <name type="ordered locus">DP0299</name>
</gene>
<proteinExistence type="inferred from homology"/>
<accession>Q6ARJ7</accession>
<reference key="1">
    <citation type="journal article" date="2004" name="Environ. Microbiol.">
        <title>The genome of Desulfotalea psychrophila, a sulfate-reducing bacterium from permanently cold Arctic sediments.</title>
        <authorList>
            <person name="Rabus R."/>
            <person name="Ruepp A."/>
            <person name="Frickey T."/>
            <person name="Rattei T."/>
            <person name="Fartmann B."/>
            <person name="Stark M."/>
            <person name="Bauer M."/>
            <person name="Zibat A."/>
            <person name="Lombardot T."/>
            <person name="Becker I."/>
            <person name="Amann J."/>
            <person name="Gellner K."/>
            <person name="Teeling H."/>
            <person name="Leuschner W.D."/>
            <person name="Gloeckner F.-O."/>
            <person name="Lupas A.N."/>
            <person name="Amann R."/>
            <person name="Klenk H.-P."/>
        </authorList>
    </citation>
    <scope>NUCLEOTIDE SEQUENCE [LARGE SCALE GENOMIC DNA]</scope>
    <source>
        <strain>DSM 12343 / LSv54</strain>
    </source>
</reference>
<organism>
    <name type="scientific">Desulfotalea psychrophila (strain LSv54 / DSM 12343)</name>
    <dbReference type="NCBI Taxonomy" id="177439"/>
    <lineage>
        <taxon>Bacteria</taxon>
        <taxon>Pseudomonadati</taxon>
        <taxon>Thermodesulfobacteriota</taxon>
        <taxon>Desulfobulbia</taxon>
        <taxon>Desulfobulbales</taxon>
        <taxon>Desulfocapsaceae</taxon>
        <taxon>Desulfotalea</taxon>
    </lineage>
</organism>
<evidence type="ECO:0000255" key="1">
    <source>
        <dbReference type="HAMAP-Rule" id="MF_00712"/>
    </source>
</evidence>
<name>GCSPA_DESPS</name>
<comment type="function">
    <text evidence="1">The glycine cleavage system catalyzes the degradation of glycine. The P protein binds the alpha-amino group of glycine through its pyridoxal phosphate cofactor; CO(2) is released and the remaining methylamine moiety is then transferred to the lipoamide cofactor of the H protein.</text>
</comment>
<comment type="catalytic activity">
    <reaction evidence="1">
        <text>N(6)-[(R)-lipoyl]-L-lysyl-[glycine-cleavage complex H protein] + glycine + H(+) = N(6)-[(R)-S(8)-aminomethyldihydrolipoyl]-L-lysyl-[glycine-cleavage complex H protein] + CO2</text>
        <dbReference type="Rhea" id="RHEA:24304"/>
        <dbReference type="Rhea" id="RHEA-COMP:10494"/>
        <dbReference type="Rhea" id="RHEA-COMP:10495"/>
        <dbReference type="ChEBI" id="CHEBI:15378"/>
        <dbReference type="ChEBI" id="CHEBI:16526"/>
        <dbReference type="ChEBI" id="CHEBI:57305"/>
        <dbReference type="ChEBI" id="CHEBI:83099"/>
        <dbReference type="ChEBI" id="CHEBI:83143"/>
        <dbReference type="EC" id="1.4.4.2"/>
    </reaction>
</comment>
<comment type="subunit">
    <text evidence="1">The glycine cleavage system is composed of four proteins: P, T, L and H. In this organism, the P 'protein' is a heterodimer of two subunits.</text>
</comment>
<comment type="similarity">
    <text evidence="1">Belongs to the GcvP family. N-terminal subunit subfamily.</text>
</comment>
<protein>
    <recommendedName>
        <fullName evidence="1">Probable glycine dehydrogenase (decarboxylating) subunit 1</fullName>
        <ecNumber evidence="1">1.4.4.2</ecNumber>
    </recommendedName>
    <alternativeName>
        <fullName evidence="1">Glycine cleavage system P-protein subunit 1</fullName>
    </alternativeName>
    <alternativeName>
        <fullName evidence="1">Glycine decarboxylase subunit 1</fullName>
    </alternativeName>
    <alternativeName>
        <fullName evidence="1">Glycine dehydrogenase (aminomethyl-transferring) subunit 1</fullName>
    </alternativeName>
</protein>
<keyword id="KW-0560">Oxidoreductase</keyword>
<keyword id="KW-1185">Reference proteome</keyword>
<sequence>MRYLPHTEEEIQEMLEVVGKESLDDLFSSVPAECRYQGDIPIPAALTEWQLKDHFAALMSKNRVNQEHKVLIGAGSYDHYVPEILPSLMSRSEFLTAYTPYQPEVAQGTLQGIFEYQTLTARLLGTDAVNASMYDGASALAESALMSFRIARKKKTVALSAAIHPHYREVVATYLQATDFTIIELPVDAEGRTDLSSLAGIEGLASVAIQSPNFFGVVEDLQGCGEKIHDVDALFISCFSEALAYGLLKSPGECGADIICGEGQSFGLGRSYGGPGVGMMGCRDKLVRNMPGRIVGQTLDTKGKRGFVLTLATREQHIRREKATSNICSNQGICAMTAGMYMATLGGTGIRQLARLNYDKAAYLRSELIKLGAKPLFDAPVFNEFALRFPFDFERVREALKEESVVAGLSLEAYYPDLQGAYLFCATETLKKEDIDRIVSSIKKHALQEV</sequence>
<dbReference type="EC" id="1.4.4.2" evidence="1"/>
<dbReference type="EMBL" id="CR522870">
    <property type="protein sequence ID" value="CAG35028.1"/>
    <property type="molecule type" value="Genomic_DNA"/>
</dbReference>
<dbReference type="RefSeq" id="WP_011187544.1">
    <property type="nucleotide sequence ID" value="NC_006138.1"/>
</dbReference>
<dbReference type="SMR" id="Q6ARJ7"/>
<dbReference type="STRING" id="177439.DP0299"/>
<dbReference type="KEGG" id="dps:DP0299"/>
<dbReference type="eggNOG" id="COG0403">
    <property type="taxonomic scope" value="Bacteria"/>
</dbReference>
<dbReference type="HOGENOM" id="CLU_004620_0_2_7"/>
<dbReference type="OrthoDB" id="9801272at2"/>
<dbReference type="Proteomes" id="UP000000602">
    <property type="component" value="Chromosome"/>
</dbReference>
<dbReference type="GO" id="GO:0004375">
    <property type="term" value="F:glycine dehydrogenase (decarboxylating) activity"/>
    <property type="evidence" value="ECO:0007669"/>
    <property type="project" value="UniProtKB-EC"/>
</dbReference>
<dbReference type="GO" id="GO:0019464">
    <property type="term" value="P:glycine decarboxylation via glycine cleavage system"/>
    <property type="evidence" value="ECO:0007669"/>
    <property type="project" value="UniProtKB-UniRule"/>
</dbReference>
<dbReference type="GO" id="GO:0009116">
    <property type="term" value="P:nucleoside metabolic process"/>
    <property type="evidence" value="ECO:0007669"/>
    <property type="project" value="InterPro"/>
</dbReference>
<dbReference type="CDD" id="cd00613">
    <property type="entry name" value="GDC-P"/>
    <property type="match status" value="1"/>
</dbReference>
<dbReference type="Gene3D" id="3.90.1150.10">
    <property type="entry name" value="Aspartate Aminotransferase, domain 1"/>
    <property type="match status" value="1"/>
</dbReference>
<dbReference type="Gene3D" id="3.40.640.10">
    <property type="entry name" value="Type I PLP-dependent aspartate aminotransferase-like (Major domain)"/>
    <property type="match status" value="1"/>
</dbReference>
<dbReference type="HAMAP" id="MF_00712">
    <property type="entry name" value="GcvPA"/>
    <property type="match status" value="1"/>
</dbReference>
<dbReference type="InterPro" id="IPR023010">
    <property type="entry name" value="GcvPA"/>
</dbReference>
<dbReference type="InterPro" id="IPR049315">
    <property type="entry name" value="GDC-P_N"/>
</dbReference>
<dbReference type="InterPro" id="IPR020581">
    <property type="entry name" value="GDC_P"/>
</dbReference>
<dbReference type="InterPro" id="IPR015424">
    <property type="entry name" value="PyrdxlP-dep_Trfase"/>
</dbReference>
<dbReference type="InterPro" id="IPR015421">
    <property type="entry name" value="PyrdxlP-dep_Trfase_major"/>
</dbReference>
<dbReference type="InterPro" id="IPR015422">
    <property type="entry name" value="PyrdxlP-dep_Trfase_small"/>
</dbReference>
<dbReference type="NCBIfam" id="NF001696">
    <property type="entry name" value="PRK00451.1"/>
    <property type="match status" value="1"/>
</dbReference>
<dbReference type="PANTHER" id="PTHR42806">
    <property type="entry name" value="GLYCINE CLEAVAGE SYSTEM P-PROTEIN"/>
    <property type="match status" value="1"/>
</dbReference>
<dbReference type="PANTHER" id="PTHR42806:SF1">
    <property type="entry name" value="GLYCINE DEHYDROGENASE (DECARBOXYLATING)"/>
    <property type="match status" value="1"/>
</dbReference>
<dbReference type="Pfam" id="PF02347">
    <property type="entry name" value="GDC-P"/>
    <property type="match status" value="1"/>
</dbReference>
<dbReference type="PIRSF" id="PIRSF006815">
    <property type="entry name" value="GcvPA"/>
    <property type="match status" value="1"/>
</dbReference>
<dbReference type="SUPFAM" id="SSF53383">
    <property type="entry name" value="PLP-dependent transferases"/>
    <property type="match status" value="1"/>
</dbReference>